<accession>O60888</accession>
<accession>A2AB26</accession>
<accession>A2BEL4</accession>
<accession>Q3B784</accession>
<accession>Q5JXM9</accession>
<accession>Q5SU05</accession>
<accession>Q9NYQ9</accession>
<gene>
    <name type="primary">CUTA</name>
    <name type="synonym">ACHAP</name>
    <name type="synonym">C6orf82</name>
</gene>
<proteinExistence type="evidence at protein level"/>
<name>CUTA_HUMAN</name>
<keyword id="KW-0002">3D-structure</keyword>
<keyword id="KW-0025">Alternative splicing</keyword>
<keyword id="KW-0903">Direct protein sequencing</keyword>
<keyword id="KW-0325">Glycoprotein</keyword>
<keyword id="KW-1267">Proteomics identification</keyword>
<keyword id="KW-1185">Reference proteome</keyword>
<keyword id="KW-0732">Signal</keyword>
<sequence>MSGGRAPAVLLGGVASLLLSFVWMPALLPVASRLLLLPRVLLTMASGSPPTQPSPASDSGSGYVPGSVSAAFVTCPNEKVAKEIARAVVEKRLAACVNLIPQITSIYEWKGKIEEDSEVLMMIKTQSSLVPALTDFVRSVHPYEVAEVIALPVEQGNFPYLQWVRQVTESVSDSITVLP</sequence>
<comment type="function">
    <text>May form part of a complex of membrane proteins attached to acetylcholinesterase (AChE).</text>
</comment>
<comment type="subunit">
    <text>Homotrimer.</text>
</comment>
<comment type="interaction">
    <interactant intactId="EBI-1051556">
        <id>O60888</id>
    </interactant>
    <interactant intactId="EBI-3864120">
        <id>Q8WUP2</id>
        <label>FBLIM1</label>
    </interactant>
    <organismsDiffer>false</organismsDiffer>
    <experiments>6</experiments>
</comment>
<comment type="interaction">
    <interactant intactId="EBI-1051556">
        <id>O60888</id>
    </interactant>
    <interactant intactId="EBI-721550">
        <id>P22736</id>
        <label>NR4A1</label>
    </interactant>
    <organismsDiffer>false</organismsDiffer>
    <experiments>2</experiments>
</comment>
<comment type="interaction">
    <interactant intactId="EBI-10979071">
        <id>O60888-3</id>
    </interactant>
    <interactant intactId="EBI-3867333">
        <id>A8MQ03</id>
        <label>CYSRT1</label>
    </interactant>
    <organismsDiffer>false</organismsDiffer>
    <experiments>3</experiments>
</comment>
<comment type="interaction">
    <interactant intactId="EBI-10979071">
        <id>O60888-3</id>
    </interactant>
    <interactant intactId="EBI-3864120">
        <id>Q8WUP2</id>
        <label>FBLIM1</label>
    </interactant>
    <organismsDiffer>false</organismsDiffer>
    <experiments>3</experiments>
</comment>
<comment type="interaction">
    <interactant intactId="EBI-10979071">
        <id>O60888-3</id>
    </interactant>
    <interactant intactId="EBI-740785">
        <id>P49639</id>
        <label>HOXA1</label>
    </interactant>
    <organismsDiffer>false</organismsDiffer>
    <experiments>3</experiments>
</comment>
<comment type="alternative products">
    <event type="alternative splicing"/>
    <isoform>
        <id>O60888-1</id>
        <name>B</name>
        <sequence type="displayed"/>
    </isoform>
    <isoform>
        <id>O60888-2</id>
        <name>A</name>
        <sequence type="described" ref="VSP_013225"/>
    </isoform>
    <isoform>
        <id>O60888-3</id>
        <name>C</name>
        <sequence type="described" ref="VSP_013226"/>
    </isoform>
</comment>
<comment type="tissue specificity">
    <text evidence="2">Ubiquitous. Widely expressed in brain.</text>
</comment>
<comment type="PTM">
    <text evidence="3">O-glycosylated.</text>
</comment>
<comment type="similarity">
    <text evidence="7">Belongs to the CutA family.</text>
</comment>
<comment type="sequence caution" evidence="7">
    <conflict type="erroneous initiation">
        <sequence resource="EMBL-CDS" id="AAF61220"/>
    </conflict>
</comment>
<organism>
    <name type="scientific">Homo sapiens</name>
    <name type="common">Human</name>
    <dbReference type="NCBI Taxonomy" id="9606"/>
    <lineage>
        <taxon>Eukaryota</taxon>
        <taxon>Metazoa</taxon>
        <taxon>Chordata</taxon>
        <taxon>Craniata</taxon>
        <taxon>Vertebrata</taxon>
        <taxon>Euteleostomi</taxon>
        <taxon>Mammalia</taxon>
        <taxon>Eutheria</taxon>
        <taxon>Euarchontoglires</taxon>
        <taxon>Primates</taxon>
        <taxon>Haplorrhini</taxon>
        <taxon>Catarrhini</taxon>
        <taxon>Hominidae</taxon>
        <taxon>Homo</taxon>
    </lineage>
</organism>
<dbReference type="EMBL" id="AF230924">
    <property type="protein sequence ID" value="AAF61220.1"/>
    <property type="status" value="ALT_INIT"/>
    <property type="molecule type" value="mRNA"/>
</dbReference>
<dbReference type="EMBL" id="AF106943">
    <property type="protein sequence ID" value="AAD21026.1"/>
    <property type="molecule type" value="mRNA"/>
</dbReference>
<dbReference type="EMBL" id="AL050332">
    <property type="protein sequence ID" value="CAB63779.1"/>
    <property type="molecule type" value="Genomic_DNA"/>
</dbReference>
<dbReference type="EMBL" id="AL021366">
    <property type="protein sequence ID" value="CAA16160.1"/>
    <property type="molecule type" value="Genomic_DNA"/>
</dbReference>
<dbReference type="EMBL" id="AL662799">
    <property type="status" value="NOT_ANNOTATED_CDS"/>
    <property type="molecule type" value="Genomic_DNA"/>
</dbReference>
<dbReference type="EMBL" id="BX088650">
    <property type="status" value="NOT_ANNOTATED_CDS"/>
    <property type="molecule type" value="Genomic_DNA"/>
</dbReference>
<dbReference type="EMBL" id="BC005890">
    <property type="protein sequence ID" value="AAH05890.1"/>
    <property type="molecule type" value="mRNA"/>
</dbReference>
<dbReference type="EMBL" id="BC107751">
    <property type="protein sequence ID" value="AAI07752.1"/>
    <property type="molecule type" value="mRNA"/>
</dbReference>
<dbReference type="CCDS" id="CCDS34433.1">
    <molecule id="O60888-1"/>
</dbReference>
<dbReference type="CCDS" id="CCDS4779.1">
    <molecule id="O60888-3"/>
</dbReference>
<dbReference type="RefSeq" id="NP_001014433.2">
    <molecule id="O60888-3"/>
    <property type="nucleotide sequence ID" value="NM_001014433.3"/>
</dbReference>
<dbReference type="RefSeq" id="NP_001014837.1">
    <molecule id="O60888-3"/>
    <property type="nucleotide sequence ID" value="NM_001014837.2"/>
</dbReference>
<dbReference type="RefSeq" id="NP_001014838.1">
    <molecule id="O60888-3"/>
    <property type="nucleotide sequence ID" value="NM_001014838.2"/>
</dbReference>
<dbReference type="RefSeq" id="NP_001014840.1">
    <molecule id="O60888-1"/>
    <property type="nucleotide sequence ID" value="NM_001014840.2"/>
</dbReference>
<dbReference type="RefSeq" id="NP_057005.1">
    <molecule id="O60888-3"/>
    <property type="nucleotide sequence ID" value="NM_015921.3"/>
</dbReference>
<dbReference type="PDB" id="1XK8">
    <property type="method" value="X-ray"/>
    <property type="resolution" value="2.70 A"/>
    <property type="chains" value="A/B/C/D/E/F=44-179"/>
</dbReference>
<dbReference type="PDB" id="2ZFH">
    <property type="method" value="X-ray"/>
    <property type="resolution" value="2.05 A"/>
    <property type="chains" value="A/B/C/D/E/F=1-179"/>
</dbReference>
<dbReference type="PDBsum" id="1XK8"/>
<dbReference type="PDBsum" id="2ZFH"/>
<dbReference type="SMR" id="O60888"/>
<dbReference type="BioGRID" id="119628">
    <property type="interactions" value="50"/>
</dbReference>
<dbReference type="FunCoup" id="O60888">
    <property type="interactions" value="270"/>
</dbReference>
<dbReference type="IntAct" id="O60888">
    <property type="interactions" value="25"/>
</dbReference>
<dbReference type="STRING" id="9606.ENSP00000499422"/>
<dbReference type="GlyCosmos" id="O60888">
    <property type="glycosylation" value="2 sites, 2 glycans"/>
</dbReference>
<dbReference type="GlyGen" id="O60888">
    <property type="glycosylation" value="5 sites, 3 O-linked glycans (5 sites)"/>
</dbReference>
<dbReference type="iPTMnet" id="O60888"/>
<dbReference type="PhosphoSitePlus" id="O60888"/>
<dbReference type="SwissPalm" id="O60888"/>
<dbReference type="BioMuta" id="CUTA"/>
<dbReference type="jPOST" id="O60888"/>
<dbReference type="MassIVE" id="O60888"/>
<dbReference type="PaxDb" id="9606-ENSP00000363624"/>
<dbReference type="PeptideAtlas" id="O60888"/>
<dbReference type="PRIDE" id="O60888"/>
<dbReference type="ProteomicsDB" id="49653">
    <molecule id="O60888-1"/>
</dbReference>
<dbReference type="ProteomicsDB" id="49654">
    <molecule id="O60888-2"/>
</dbReference>
<dbReference type="ProteomicsDB" id="49655">
    <molecule id="O60888-3"/>
</dbReference>
<dbReference type="Pumba" id="O60888"/>
<dbReference type="Antibodypedia" id="29177">
    <property type="antibodies" value="173 antibodies from 25 providers"/>
</dbReference>
<dbReference type="DNASU" id="51596"/>
<dbReference type="Ensembl" id="ENST00000374496.3">
    <molecule id="O60888-3"/>
    <property type="protein sequence ID" value="ENSP00000363620.3"/>
    <property type="gene ID" value="ENSG00000112514.18"/>
</dbReference>
<dbReference type="Ensembl" id="ENST00000374500.10">
    <molecule id="O60888-3"/>
    <property type="protein sequence ID" value="ENSP00000363624.6"/>
    <property type="gene ID" value="ENSG00000112514.18"/>
</dbReference>
<dbReference type="Ensembl" id="ENST00000435267.6">
    <molecule id="O60888-2"/>
    <property type="protein sequence ID" value="ENSP00000391509.2"/>
    <property type="gene ID" value="ENSG00000226492.7"/>
</dbReference>
<dbReference type="Ensembl" id="ENST00000440279.7">
    <molecule id="O60888-3"/>
    <property type="protein sequence ID" value="ENSP00000403268.2"/>
    <property type="gene ID" value="ENSG00000112514.18"/>
</dbReference>
<dbReference type="Ensembl" id="ENST00000440930.6">
    <molecule id="O60888-1"/>
    <property type="protein sequence ID" value="ENSP00000400114.2"/>
    <property type="gene ID" value="ENSG00000226492.7"/>
</dbReference>
<dbReference type="Ensembl" id="ENST00000487148.5">
    <molecule id="O60888-3"/>
    <property type="protein sequence ID" value="ENSP00000432744.1"/>
    <property type="gene ID" value="ENSG00000226492.7"/>
</dbReference>
<dbReference type="Ensembl" id="ENST00000488034.6">
    <molecule id="O60888-1"/>
    <property type="protein sequence ID" value="ENSP00000417544.1"/>
    <property type="gene ID" value="ENSG00000112514.18"/>
</dbReference>
<dbReference type="Ensembl" id="ENST00000607266.5">
    <molecule id="O60888-3"/>
    <property type="protein sequence ID" value="ENSP00000475963.1"/>
    <property type="gene ID" value="ENSG00000112514.18"/>
</dbReference>
<dbReference type="GeneID" id="51596"/>
<dbReference type="KEGG" id="hsa:51596"/>
<dbReference type="MANE-Select" id="ENST00000488034.6">
    <property type="protein sequence ID" value="ENSP00000417544.1"/>
    <property type="RefSeq nucleotide sequence ID" value="NM_001014840.2"/>
    <property type="RefSeq protein sequence ID" value="NP_001014840.1"/>
</dbReference>
<dbReference type="UCSC" id="uc003oej.2">
    <molecule id="O60888-1"/>
    <property type="organism name" value="human"/>
</dbReference>
<dbReference type="AGR" id="HGNC:21101"/>
<dbReference type="CTD" id="51596"/>
<dbReference type="DisGeNET" id="51596"/>
<dbReference type="GeneCards" id="CUTA"/>
<dbReference type="HGNC" id="HGNC:21101">
    <property type="gene designation" value="CUTA"/>
</dbReference>
<dbReference type="HPA" id="ENSG00000112514">
    <property type="expression patterns" value="Low tissue specificity"/>
</dbReference>
<dbReference type="neXtProt" id="NX_O60888"/>
<dbReference type="OpenTargets" id="ENSG00000112514"/>
<dbReference type="PharmGKB" id="PA134928220"/>
<dbReference type="VEuPathDB" id="HostDB:ENSG00000112514"/>
<dbReference type="eggNOG" id="KOG3338">
    <property type="taxonomic scope" value="Eukaryota"/>
</dbReference>
<dbReference type="GeneTree" id="ENSGT00390000017030"/>
<dbReference type="HOGENOM" id="CLU_098807_1_1_1"/>
<dbReference type="InParanoid" id="O60888"/>
<dbReference type="OMA" id="SCLWMPA"/>
<dbReference type="OrthoDB" id="2017693at2759"/>
<dbReference type="PAN-GO" id="O60888">
    <property type="GO annotations" value="1 GO annotation based on evolutionary models"/>
</dbReference>
<dbReference type="PhylomeDB" id="O60888"/>
<dbReference type="TreeFam" id="TF313269"/>
<dbReference type="PathwayCommons" id="O60888"/>
<dbReference type="SignaLink" id="O60888"/>
<dbReference type="BioGRID-ORCS" id="51596">
    <property type="hits" value="10 hits in 1159 CRISPR screens"/>
</dbReference>
<dbReference type="ChiTaRS" id="CUTA">
    <property type="organism name" value="human"/>
</dbReference>
<dbReference type="EvolutionaryTrace" id="O60888"/>
<dbReference type="GenomeRNAi" id="51596"/>
<dbReference type="Pharos" id="O60888">
    <property type="development level" value="Tbio"/>
</dbReference>
<dbReference type="PRO" id="PR:O60888"/>
<dbReference type="Proteomes" id="UP000005640">
    <property type="component" value="Chromosome 6"/>
</dbReference>
<dbReference type="RNAct" id="O60888">
    <property type="molecule type" value="protein"/>
</dbReference>
<dbReference type="Bgee" id="ENSG00000112514">
    <property type="expression patterns" value="Expressed in pituitary gland and 96 other cell types or tissues"/>
</dbReference>
<dbReference type="ExpressionAtlas" id="O60888">
    <property type="expression patterns" value="baseline and differential"/>
</dbReference>
<dbReference type="GO" id="GO:0070062">
    <property type="term" value="C:extracellular exosome"/>
    <property type="evidence" value="ECO:0007005"/>
    <property type="project" value="UniProtKB"/>
</dbReference>
<dbReference type="GO" id="GO:0016020">
    <property type="term" value="C:membrane"/>
    <property type="evidence" value="ECO:0000314"/>
    <property type="project" value="UniProtKB"/>
</dbReference>
<dbReference type="GO" id="GO:0005739">
    <property type="term" value="C:mitochondrion"/>
    <property type="evidence" value="ECO:0000314"/>
    <property type="project" value="FlyBase"/>
</dbReference>
<dbReference type="GO" id="GO:0005507">
    <property type="term" value="F:copper ion binding"/>
    <property type="evidence" value="ECO:0000318"/>
    <property type="project" value="GO_Central"/>
</dbReference>
<dbReference type="GO" id="GO:0019899">
    <property type="term" value="F:enzyme binding"/>
    <property type="evidence" value="ECO:0000353"/>
    <property type="project" value="UniProtKB"/>
</dbReference>
<dbReference type="GO" id="GO:0008104">
    <property type="term" value="P:protein localization"/>
    <property type="evidence" value="ECO:0000314"/>
    <property type="project" value="UniProtKB"/>
</dbReference>
<dbReference type="GO" id="GO:0010038">
    <property type="term" value="P:response to metal ion"/>
    <property type="evidence" value="ECO:0007669"/>
    <property type="project" value="InterPro"/>
</dbReference>
<dbReference type="DisProt" id="DP00846"/>
<dbReference type="FunFam" id="3.30.70.120:FF:000005">
    <property type="entry name" value="CUTA isoform 1"/>
    <property type="match status" value="1"/>
</dbReference>
<dbReference type="Gene3D" id="3.30.70.120">
    <property type="match status" value="1"/>
</dbReference>
<dbReference type="InterPro" id="IPR004323">
    <property type="entry name" value="Ion_tolerance_CutA"/>
</dbReference>
<dbReference type="InterPro" id="IPR011322">
    <property type="entry name" value="N-reg_PII-like_a/b"/>
</dbReference>
<dbReference type="InterPro" id="IPR015867">
    <property type="entry name" value="N-reg_PII/ATP_PRibTrfase_C"/>
</dbReference>
<dbReference type="PANTHER" id="PTHR23419">
    <property type="entry name" value="DIVALENT CATION TOLERANCE CUTA-RELATED"/>
    <property type="match status" value="1"/>
</dbReference>
<dbReference type="PANTHER" id="PTHR23419:SF1">
    <property type="entry name" value="PROTEIN CUTA"/>
    <property type="match status" value="1"/>
</dbReference>
<dbReference type="Pfam" id="PF03091">
    <property type="entry name" value="CutA1"/>
    <property type="match status" value="1"/>
</dbReference>
<dbReference type="SUPFAM" id="SSF54913">
    <property type="entry name" value="GlnB-like"/>
    <property type="match status" value="1"/>
</dbReference>
<feature type="signal peptide" evidence="1">
    <location>
        <begin position="1"/>
        <end position="32"/>
    </location>
</feature>
<feature type="chain" id="PRO_0000006379" description="Protein CutA">
    <location>
        <begin position="33"/>
        <end position="179"/>
    </location>
</feature>
<feature type="region of interest" description="O-glycosylated at one site">
    <location>
        <begin position="168"/>
        <end position="176"/>
    </location>
</feature>
<feature type="splice variant" id="VSP_013226" description="In isoform C." evidence="4 5 6">
    <location>
        <begin position="1"/>
        <end position="23"/>
    </location>
</feature>
<feature type="splice variant" id="VSP_013225" description="In isoform A." evidence="7">
    <original>MSGGRAPAVLLGGV</original>
    <variation>MIGSGLAGSGGAGGPSSTVTWCALFSNHVAATQ</variation>
    <location>
        <begin position="1"/>
        <end position="14"/>
    </location>
</feature>
<feature type="strand" evidence="8">
    <location>
        <begin position="67"/>
        <end position="77"/>
    </location>
</feature>
<feature type="helix" evidence="8">
    <location>
        <begin position="78"/>
        <end position="90"/>
    </location>
</feature>
<feature type="strand" evidence="8">
    <location>
        <begin position="95"/>
        <end position="109"/>
    </location>
</feature>
<feature type="strand" evidence="8">
    <location>
        <begin position="112"/>
        <end position="126"/>
    </location>
</feature>
<feature type="helix" evidence="8">
    <location>
        <begin position="127"/>
        <end position="129"/>
    </location>
</feature>
<feature type="helix" evidence="8">
    <location>
        <begin position="130"/>
        <end position="140"/>
    </location>
</feature>
<feature type="strand" evidence="8">
    <location>
        <begin position="142"/>
        <end position="145"/>
    </location>
</feature>
<feature type="strand" evidence="8">
    <location>
        <begin position="148"/>
        <end position="153"/>
    </location>
</feature>
<feature type="helix" evidence="8">
    <location>
        <begin position="158"/>
        <end position="166"/>
    </location>
</feature>
<protein>
    <recommendedName>
        <fullName>Protein CutA</fullName>
    </recommendedName>
    <alternativeName>
        <fullName>Acetylcholinesterase-associated protein</fullName>
    </alternativeName>
    <alternativeName>
        <fullName>Brain acetylcholinesterase putative membrane anchor</fullName>
    </alternativeName>
</protein>
<reference key="1">
    <citation type="journal article" date="2000" name="J. Neurochem.">
        <title>Hydrophobic protein that copurifies with human brain acetylcholinesterase: amino acid sequence, genomic organization, and chromosomal localization.</title>
        <authorList>
            <person name="Navaratnam D.S."/>
            <person name="Fernando F.S."/>
            <person name="Priddle J.D."/>
            <person name="Giles K."/>
            <person name="Clegg S.M."/>
            <person name="Pappin D.J.C."/>
            <person name="Craig I."/>
            <person name="Smith A.D."/>
        </authorList>
    </citation>
    <scope>NUCLEOTIDE SEQUENCE [MRNA] (ISOFORM C)</scope>
    <scope>PROTEIN SEQUENCE OF 70-74 AND 84-178</scope>
    <scope>TISSUE SPECIFICITY</scope>
    <scope>PUTATIVE FUNCTION</scope>
</reference>
<reference key="2">
    <citation type="submission" date="1998-11" db="EMBL/GenBank/DDBJ databases">
        <title>Cloning and isolating human CUTA cDNA.</title>
        <authorList>
            <person name="Luo W.Q."/>
            <person name="Chen J.H."/>
            <person name="Huan X.W."/>
            <person name="Zhou Y."/>
            <person name="Yuan J.G."/>
            <person name="Qiang B.Q."/>
        </authorList>
    </citation>
    <scope>NUCLEOTIDE SEQUENCE [MRNA] (ISOFORM C)</scope>
</reference>
<reference key="3">
    <citation type="journal article" date="2003" name="Nature">
        <title>The DNA sequence and analysis of human chromosome 6.</title>
        <authorList>
            <person name="Mungall A.J."/>
            <person name="Palmer S.A."/>
            <person name="Sims S.K."/>
            <person name="Edwards C.A."/>
            <person name="Ashurst J.L."/>
            <person name="Wilming L."/>
            <person name="Jones M.C."/>
            <person name="Horton R."/>
            <person name="Hunt S.E."/>
            <person name="Scott C.E."/>
            <person name="Gilbert J.G.R."/>
            <person name="Clamp M.E."/>
            <person name="Bethel G."/>
            <person name="Milne S."/>
            <person name="Ainscough R."/>
            <person name="Almeida J.P."/>
            <person name="Ambrose K.D."/>
            <person name="Andrews T.D."/>
            <person name="Ashwell R.I.S."/>
            <person name="Babbage A.K."/>
            <person name="Bagguley C.L."/>
            <person name="Bailey J."/>
            <person name="Banerjee R."/>
            <person name="Barker D.J."/>
            <person name="Barlow K.F."/>
            <person name="Bates K."/>
            <person name="Beare D.M."/>
            <person name="Beasley H."/>
            <person name="Beasley O."/>
            <person name="Bird C.P."/>
            <person name="Blakey S.E."/>
            <person name="Bray-Allen S."/>
            <person name="Brook J."/>
            <person name="Brown A.J."/>
            <person name="Brown J.Y."/>
            <person name="Burford D.C."/>
            <person name="Burrill W."/>
            <person name="Burton J."/>
            <person name="Carder C."/>
            <person name="Carter N.P."/>
            <person name="Chapman J.C."/>
            <person name="Clark S.Y."/>
            <person name="Clark G."/>
            <person name="Clee C.M."/>
            <person name="Clegg S."/>
            <person name="Cobley V."/>
            <person name="Collier R.E."/>
            <person name="Collins J.E."/>
            <person name="Colman L.K."/>
            <person name="Corby N.R."/>
            <person name="Coville G.J."/>
            <person name="Culley K.M."/>
            <person name="Dhami P."/>
            <person name="Davies J."/>
            <person name="Dunn M."/>
            <person name="Earthrowl M.E."/>
            <person name="Ellington A.E."/>
            <person name="Evans K.A."/>
            <person name="Faulkner L."/>
            <person name="Francis M.D."/>
            <person name="Frankish A."/>
            <person name="Frankland J."/>
            <person name="French L."/>
            <person name="Garner P."/>
            <person name="Garnett J."/>
            <person name="Ghori M.J."/>
            <person name="Gilby L.M."/>
            <person name="Gillson C.J."/>
            <person name="Glithero R.J."/>
            <person name="Grafham D.V."/>
            <person name="Grant M."/>
            <person name="Gribble S."/>
            <person name="Griffiths C."/>
            <person name="Griffiths M.N.D."/>
            <person name="Hall R."/>
            <person name="Halls K.S."/>
            <person name="Hammond S."/>
            <person name="Harley J.L."/>
            <person name="Hart E.A."/>
            <person name="Heath P.D."/>
            <person name="Heathcott R."/>
            <person name="Holmes S.J."/>
            <person name="Howden P.J."/>
            <person name="Howe K.L."/>
            <person name="Howell G.R."/>
            <person name="Huckle E."/>
            <person name="Humphray S.J."/>
            <person name="Humphries M.D."/>
            <person name="Hunt A.R."/>
            <person name="Johnson C.M."/>
            <person name="Joy A.A."/>
            <person name="Kay M."/>
            <person name="Keenan S.J."/>
            <person name="Kimberley A.M."/>
            <person name="King A."/>
            <person name="Laird G.K."/>
            <person name="Langford C."/>
            <person name="Lawlor S."/>
            <person name="Leongamornlert D.A."/>
            <person name="Leversha M."/>
            <person name="Lloyd C.R."/>
            <person name="Lloyd D.M."/>
            <person name="Loveland J.E."/>
            <person name="Lovell J."/>
            <person name="Martin S."/>
            <person name="Mashreghi-Mohammadi M."/>
            <person name="Maslen G.L."/>
            <person name="Matthews L."/>
            <person name="McCann O.T."/>
            <person name="McLaren S.J."/>
            <person name="McLay K."/>
            <person name="McMurray A."/>
            <person name="Moore M.J.F."/>
            <person name="Mullikin J.C."/>
            <person name="Niblett D."/>
            <person name="Nickerson T."/>
            <person name="Novik K.L."/>
            <person name="Oliver K."/>
            <person name="Overton-Larty E.K."/>
            <person name="Parker A."/>
            <person name="Patel R."/>
            <person name="Pearce A.V."/>
            <person name="Peck A.I."/>
            <person name="Phillimore B.J.C.T."/>
            <person name="Phillips S."/>
            <person name="Plumb R.W."/>
            <person name="Porter K.M."/>
            <person name="Ramsey Y."/>
            <person name="Ranby S.A."/>
            <person name="Rice C.M."/>
            <person name="Ross M.T."/>
            <person name="Searle S.M."/>
            <person name="Sehra H.K."/>
            <person name="Sheridan E."/>
            <person name="Skuce C.D."/>
            <person name="Smith S."/>
            <person name="Smith M."/>
            <person name="Spraggon L."/>
            <person name="Squares S.L."/>
            <person name="Steward C.A."/>
            <person name="Sycamore N."/>
            <person name="Tamlyn-Hall G."/>
            <person name="Tester J."/>
            <person name="Theaker A.J."/>
            <person name="Thomas D.W."/>
            <person name="Thorpe A."/>
            <person name="Tracey A."/>
            <person name="Tromans A."/>
            <person name="Tubby B."/>
            <person name="Wall M."/>
            <person name="Wallis J.M."/>
            <person name="West A.P."/>
            <person name="White S.S."/>
            <person name="Whitehead S.L."/>
            <person name="Whittaker H."/>
            <person name="Wild A."/>
            <person name="Willey D.J."/>
            <person name="Wilmer T.E."/>
            <person name="Wood J.M."/>
            <person name="Wray P.W."/>
            <person name="Wyatt J.C."/>
            <person name="Young L."/>
            <person name="Younger R.M."/>
            <person name="Bentley D.R."/>
            <person name="Coulson A."/>
            <person name="Durbin R.M."/>
            <person name="Hubbard T."/>
            <person name="Sulston J.E."/>
            <person name="Dunham I."/>
            <person name="Rogers J."/>
            <person name="Beck S."/>
        </authorList>
    </citation>
    <scope>NUCLEOTIDE SEQUENCE [LARGE SCALE GENOMIC DNA]</scope>
</reference>
<reference key="4">
    <citation type="journal article" date="2004" name="Genome Res.">
        <title>The status, quality, and expansion of the NIH full-length cDNA project: the Mammalian Gene Collection (MGC).</title>
        <authorList>
            <consortium name="The MGC Project Team"/>
        </authorList>
    </citation>
    <scope>NUCLEOTIDE SEQUENCE [LARGE SCALE MRNA] (ISOFORM C)</scope>
    <source>
        <tissue>Placenta</tissue>
    </source>
</reference>
<reference key="5">
    <citation type="journal article" date="2000" name="J. Biol. Chem.">
        <title>Two distinct proteins are associated with tetrameric acetylcholinesterase on the cell surface.</title>
        <authorList>
            <person name="Perrier A.L."/>
            <person name="Cousin X."/>
            <person name="Boschetti N."/>
            <person name="Haas R."/>
            <person name="Chatel J.-M."/>
            <person name="Bon S."/>
            <person name="Roberts W.L."/>
            <person name="Pickett S.R."/>
            <person name="Massoulie J."/>
            <person name="Rosenberry T.L."/>
            <person name="Krejci E."/>
        </authorList>
    </citation>
    <scope>ALTERNATIVE SPLICING (ISOFORMS A; B AND C)</scope>
</reference>
<reference key="6">
    <citation type="journal article" date="2011" name="BMC Syst. Biol.">
        <title>Initial characterization of the human central proteome.</title>
        <authorList>
            <person name="Burkard T.R."/>
            <person name="Planyavsky M."/>
            <person name="Kaupe I."/>
            <person name="Breitwieser F.P."/>
            <person name="Buerckstuemmer T."/>
            <person name="Bennett K.L."/>
            <person name="Superti-Furga G."/>
            <person name="Colinge J."/>
        </authorList>
    </citation>
    <scope>IDENTIFICATION BY MASS SPECTROMETRY [LARGE SCALE ANALYSIS]</scope>
</reference>
<reference key="7">
    <citation type="journal article" date="2013" name="J. Proteome Res.">
        <title>LC-MS/MS characterization of O-glycosylation sites and glycan structures of human cerebrospinal fluid glycoproteins.</title>
        <authorList>
            <person name="Halim A."/>
            <person name="Ruetschi U."/>
            <person name="Larson G."/>
            <person name="Nilsson J."/>
        </authorList>
    </citation>
    <scope>GLYCOSYLATION</scope>
    <scope>IDENTIFICATION BY MASS SPECTROMETRY</scope>
</reference>
<reference key="8">
    <citation type="journal article" date="2014" name="J. Proteomics">
        <title>An enzyme assisted RP-RPLC approach for in-depth analysis of human liver phosphoproteome.</title>
        <authorList>
            <person name="Bian Y."/>
            <person name="Song C."/>
            <person name="Cheng K."/>
            <person name="Dong M."/>
            <person name="Wang F."/>
            <person name="Huang J."/>
            <person name="Sun D."/>
            <person name="Wang L."/>
            <person name="Ye M."/>
            <person name="Zou H."/>
        </authorList>
    </citation>
    <scope>IDENTIFICATION BY MASS SPECTROMETRY [LARGE SCALE ANALYSIS]</scope>
    <source>
        <tissue>Liver</tissue>
    </source>
</reference>
<reference key="9">
    <citation type="journal article" date="2015" name="Proteomics">
        <title>N-terminome analysis of the human mitochondrial proteome.</title>
        <authorList>
            <person name="Vaca Jacome A.S."/>
            <person name="Rabilloud T."/>
            <person name="Schaeffer-Reiss C."/>
            <person name="Rompais M."/>
            <person name="Ayoub D."/>
            <person name="Lane L."/>
            <person name="Bairoch A."/>
            <person name="Van Dorsselaer A."/>
            <person name="Carapito C."/>
        </authorList>
    </citation>
    <scope>IDENTIFICATION BY MASS SPECTROMETRY [LARGE SCALE ANALYSIS]</scope>
</reference>
<reference key="10">
    <citation type="submission" date="2004-09" db="PDB data bank">
        <title>Divalent cation tolerant protein CUTA from Homo sapiens O60888.</title>
        <authorList>
            <consortium name="Southeast collaboratory for structural genomics (SECSG)"/>
        </authorList>
    </citation>
    <scope>X-RAY CRYSTALLOGRAPHY (2.7 ANGSTROMS) OF 44-179</scope>
</reference>
<evidence type="ECO:0000255" key="1"/>
<evidence type="ECO:0000269" key="2">
    <source>
    </source>
</evidence>
<evidence type="ECO:0000269" key="3">
    <source>
    </source>
</evidence>
<evidence type="ECO:0000303" key="4">
    <source>
    </source>
</evidence>
<evidence type="ECO:0000303" key="5">
    <source>
    </source>
</evidence>
<evidence type="ECO:0000303" key="6">
    <source ref="2"/>
</evidence>
<evidence type="ECO:0000305" key="7"/>
<evidence type="ECO:0007829" key="8">
    <source>
        <dbReference type="PDB" id="2ZFH"/>
    </source>
</evidence>